<protein>
    <recommendedName>
        <fullName evidence="1">Isoleucine--tRNA ligase</fullName>
        <ecNumber evidence="1">6.1.1.5</ecNumber>
    </recommendedName>
    <alternativeName>
        <fullName evidence="1">Isoleucyl-tRNA synthetase</fullName>
        <shortName evidence="1">IleRS</shortName>
    </alternativeName>
</protein>
<sequence>MEEYKDTLNLNTTTFSMKGNLSVNEPKTYAKWQEQQVFKRMQNRKDNHGDFTLHDGPPYANGHLHLGHALNKILKDIVVKREYFKGNKIYYTPGWDCHGLPIEQQILERLEKEKTSLENPTLFREKCRDHAKKFLEIQKNEFLQLGVLGDFEDPYKTMDFKFEASIYRALVEVAKKGLLKERHKPIYWSYACESALAEAEVEYKMKKSPSIFVAFGLKKESLEKLKVKKASLVIWTTTPWTLYANVAIALKKDAIYALTQKGYLVAKALHEKLAALGVVDSEIAHEFNANDLEYLKASNPLNQRDSLITLGEHVGLEDGTGAVHTAPGHGEEDYYLGLRYNLEVLMSVDEKGCYDEGIIHNQLLDESYLGEHVFKAQKRIIEQLGDSLLLEQEIEHSYPYCWRTHKPVIYRATTQWFILMDEPFIQNDGSQKTLREVALDAIEKVEFVPSSGKNRLKTMIENRPDWCLSRQRKWGVPLAFFIDKRTNKPCFESEVLEHVAHLFEKKGCDVWWESSVKDLLPPSYQEDATHYEKVMHILDVWFDSGSTFKAVLEDYHGEKGQSPSDVILEGSDQHRGWFQSSLLIGCVLNNQAPFKKVITHGFIVDEKGEKMSKSKGNVVSLDNLLKKHGSDVVRLWVAFNDYQNDLRVSQTFFIQTEQHYKKFRNTLKFLLANFSDMDLKNLERSHNFSPLDHFILEALETISVGVNSAFEEHDFVKGLNVLMAFVTNELSGIYLDACKDSLYCDSKNNEKRQAIQMVLLATASKLCYFLAPILTHTIEEVLEHSQVLCAFLQAKDVFDLKDISVSEKLHLKEFKKPENFEAVLALRSAFNEELDRLKKEGVIKNSLECAIEVKEKALRENLVEELLMVSFVGIAKEKLSETPAFTLFKAPFYKCPRCWRFKSELENTPCKRCEEVLKER</sequence>
<reference key="1">
    <citation type="journal article" date="2006" name="Proc. Natl. Acad. Sci. U.S.A.">
        <title>The complete genome sequence of a chronic atrophic gastritis Helicobacter pylori strain: evolution during disease progression.</title>
        <authorList>
            <person name="Oh J.D."/>
            <person name="Kling-Baeckhed H."/>
            <person name="Giannakis M."/>
            <person name="Xu J."/>
            <person name="Fulton R.S."/>
            <person name="Fulton L.A."/>
            <person name="Cordum H.S."/>
            <person name="Wang C."/>
            <person name="Elliott G."/>
            <person name="Edwards J."/>
            <person name="Mardis E.R."/>
            <person name="Engstrand L.G."/>
            <person name="Gordon J.I."/>
        </authorList>
    </citation>
    <scope>NUCLEOTIDE SEQUENCE [LARGE SCALE GENOMIC DNA]</scope>
    <source>
        <strain>HPAG1</strain>
    </source>
</reference>
<proteinExistence type="inferred from homology"/>
<dbReference type="EC" id="6.1.1.5" evidence="1"/>
<dbReference type="EMBL" id="CP000241">
    <property type="protein sequence ID" value="ABF85415.1"/>
    <property type="molecule type" value="Genomic_DNA"/>
</dbReference>
<dbReference type="RefSeq" id="WP_000393441.1">
    <property type="nucleotide sequence ID" value="NC_008086.1"/>
</dbReference>
<dbReference type="SMR" id="Q1CRK7"/>
<dbReference type="KEGG" id="hpa:HPAG1_1348"/>
<dbReference type="HOGENOM" id="CLU_001493_7_0_7"/>
<dbReference type="GO" id="GO:0005829">
    <property type="term" value="C:cytosol"/>
    <property type="evidence" value="ECO:0007669"/>
    <property type="project" value="TreeGrafter"/>
</dbReference>
<dbReference type="GO" id="GO:0002161">
    <property type="term" value="F:aminoacyl-tRNA deacylase activity"/>
    <property type="evidence" value="ECO:0007669"/>
    <property type="project" value="InterPro"/>
</dbReference>
<dbReference type="GO" id="GO:0005524">
    <property type="term" value="F:ATP binding"/>
    <property type="evidence" value="ECO:0007669"/>
    <property type="project" value="UniProtKB-UniRule"/>
</dbReference>
<dbReference type="GO" id="GO:0004822">
    <property type="term" value="F:isoleucine-tRNA ligase activity"/>
    <property type="evidence" value="ECO:0007669"/>
    <property type="project" value="UniProtKB-UniRule"/>
</dbReference>
<dbReference type="GO" id="GO:0000049">
    <property type="term" value="F:tRNA binding"/>
    <property type="evidence" value="ECO:0007669"/>
    <property type="project" value="InterPro"/>
</dbReference>
<dbReference type="GO" id="GO:0008270">
    <property type="term" value="F:zinc ion binding"/>
    <property type="evidence" value="ECO:0007669"/>
    <property type="project" value="UniProtKB-UniRule"/>
</dbReference>
<dbReference type="GO" id="GO:0006428">
    <property type="term" value="P:isoleucyl-tRNA aminoacylation"/>
    <property type="evidence" value="ECO:0007669"/>
    <property type="project" value="UniProtKB-UniRule"/>
</dbReference>
<dbReference type="CDD" id="cd07960">
    <property type="entry name" value="Anticodon_Ia_Ile_BEm"/>
    <property type="match status" value="1"/>
</dbReference>
<dbReference type="CDD" id="cd00818">
    <property type="entry name" value="IleRS_core"/>
    <property type="match status" value="1"/>
</dbReference>
<dbReference type="FunFam" id="1.10.730.20:FF:000007">
    <property type="entry name" value="Isoleucine--tRNA ligase"/>
    <property type="match status" value="1"/>
</dbReference>
<dbReference type="FunFam" id="3.40.50.620:FF:000168">
    <property type="entry name" value="Isoleucine--tRNA ligase"/>
    <property type="match status" value="1"/>
</dbReference>
<dbReference type="Gene3D" id="1.10.730.20">
    <property type="match status" value="1"/>
</dbReference>
<dbReference type="Gene3D" id="3.40.50.620">
    <property type="entry name" value="HUPs"/>
    <property type="match status" value="2"/>
</dbReference>
<dbReference type="Gene3D" id="1.10.10.830">
    <property type="entry name" value="Ile-tRNA synthetase CP2 domain-like"/>
    <property type="match status" value="1"/>
</dbReference>
<dbReference type="HAMAP" id="MF_02002">
    <property type="entry name" value="Ile_tRNA_synth_type1"/>
    <property type="match status" value="1"/>
</dbReference>
<dbReference type="InterPro" id="IPR001412">
    <property type="entry name" value="aa-tRNA-synth_I_CS"/>
</dbReference>
<dbReference type="InterPro" id="IPR002300">
    <property type="entry name" value="aa-tRNA-synth_Ia"/>
</dbReference>
<dbReference type="InterPro" id="IPR033708">
    <property type="entry name" value="Anticodon_Ile_BEm"/>
</dbReference>
<dbReference type="InterPro" id="IPR002301">
    <property type="entry name" value="Ile-tRNA-ligase"/>
</dbReference>
<dbReference type="InterPro" id="IPR023585">
    <property type="entry name" value="Ile-tRNA-ligase_type1"/>
</dbReference>
<dbReference type="InterPro" id="IPR050081">
    <property type="entry name" value="Ile-tRNA_ligase"/>
</dbReference>
<dbReference type="InterPro" id="IPR013155">
    <property type="entry name" value="M/V/L/I-tRNA-synth_anticd-bd"/>
</dbReference>
<dbReference type="InterPro" id="IPR014729">
    <property type="entry name" value="Rossmann-like_a/b/a_fold"/>
</dbReference>
<dbReference type="InterPro" id="IPR009080">
    <property type="entry name" value="tRNAsynth_Ia_anticodon-bd"/>
</dbReference>
<dbReference type="InterPro" id="IPR009008">
    <property type="entry name" value="Val/Leu/Ile-tRNA-synth_edit"/>
</dbReference>
<dbReference type="NCBIfam" id="TIGR00392">
    <property type="entry name" value="ileS"/>
    <property type="match status" value="1"/>
</dbReference>
<dbReference type="PANTHER" id="PTHR42765:SF1">
    <property type="entry name" value="ISOLEUCINE--TRNA LIGASE, MITOCHONDRIAL"/>
    <property type="match status" value="1"/>
</dbReference>
<dbReference type="PANTHER" id="PTHR42765">
    <property type="entry name" value="SOLEUCYL-TRNA SYNTHETASE"/>
    <property type="match status" value="1"/>
</dbReference>
<dbReference type="Pfam" id="PF08264">
    <property type="entry name" value="Anticodon_1"/>
    <property type="match status" value="1"/>
</dbReference>
<dbReference type="Pfam" id="PF00133">
    <property type="entry name" value="tRNA-synt_1"/>
    <property type="match status" value="1"/>
</dbReference>
<dbReference type="PRINTS" id="PR00984">
    <property type="entry name" value="TRNASYNTHILE"/>
</dbReference>
<dbReference type="SUPFAM" id="SSF47323">
    <property type="entry name" value="Anticodon-binding domain of a subclass of class I aminoacyl-tRNA synthetases"/>
    <property type="match status" value="1"/>
</dbReference>
<dbReference type="SUPFAM" id="SSF52374">
    <property type="entry name" value="Nucleotidylyl transferase"/>
    <property type="match status" value="1"/>
</dbReference>
<dbReference type="SUPFAM" id="SSF50677">
    <property type="entry name" value="ValRS/IleRS/LeuRS editing domain"/>
    <property type="match status" value="1"/>
</dbReference>
<dbReference type="PROSITE" id="PS00178">
    <property type="entry name" value="AA_TRNA_LIGASE_I"/>
    <property type="match status" value="1"/>
</dbReference>
<feature type="chain" id="PRO_1000022078" description="Isoleucine--tRNA ligase">
    <location>
        <begin position="1"/>
        <end position="920"/>
    </location>
</feature>
<feature type="short sequence motif" description="'HIGH' region">
    <location>
        <begin position="58"/>
        <end position="68"/>
    </location>
</feature>
<feature type="short sequence motif" description="'KMSKS' region">
    <location>
        <begin position="610"/>
        <end position="614"/>
    </location>
</feature>
<feature type="binding site" evidence="1">
    <location>
        <position position="569"/>
    </location>
    <ligand>
        <name>L-isoleucyl-5'-AMP</name>
        <dbReference type="ChEBI" id="CHEBI:178002"/>
    </ligand>
</feature>
<feature type="binding site" evidence="1">
    <location>
        <position position="613"/>
    </location>
    <ligand>
        <name>ATP</name>
        <dbReference type="ChEBI" id="CHEBI:30616"/>
    </ligand>
</feature>
<feature type="binding site" evidence="1">
    <location>
        <position position="895"/>
    </location>
    <ligand>
        <name>Zn(2+)</name>
        <dbReference type="ChEBI" id="CHEBI:29105"/>
    </ligand>
</feature>
<feature type="binding site" evidence="1">
    <location>
        <position position="898"/>
    </location>
    <ligand>
        <name>Zn(2+)</name>
        <dbReference type="ChEBI" id="CHEBI:29105"/>
    </ligand>
</feature>
<feature type="binding site" evidence="1">
    <location>
        <position position="910"/>
    </location>
    <ligand>
        <name>Zn(2+)</name>
        <dbReference type="ChEBI" id="CHEBI:29105"/>
    </ligand>
</feature>
<feature type="binding site" evidence="1">
    <location>
        <position position="913"/>
    </location>
    <ligand>
        <name>Zn(2+)</name>
        <dbReference type="ChEBI" id="CHEBI:29105"/>
    </ligand>
</feature>
<accession>Q1CRK7</accession>
<gene>
    <name evidence="1" type="primary">ileS</name>
    <name type="ordered locus">HPAG1_1348</name>
</gene>
<comment type="function">
    <text evidence="1">Catalyzes the attachment of isoleucine to tRNA(Ile). As IleRS can inadvertently accommodate and process structurally similar amino acids such as valine, to avoid such errors it has two additional distinct tRNA(Ile)-dependent editing activities. One activity is designated as 'pretransfer' editing and involves the hydrolysis of activated Val-AMP. The other activity is designated 'posttransfer' editing and involves deacylation of mischarged Val-tRNA(Ile).</text>
</comment>
<comment type="catalytic activity">
    <reaction evidence="1">
        <text>tRNA(Ile) + L-isoleucine + ATP = L-isoleucyl-tRNA(Ile) + AMP + diphosphate</text>
        <dbReference type="Rhea" id="RHEA:11060"/>
        <dbReference type="Rhea" id="RHEA-COMP:9666"/>
        <dbReference type="Rhea" id="RHEA-COMP:9695"/>
        <dbReference type="ChEBI" id="CHEBI:30616"/>
        <dbReference type="ChEBI" id="CHEBI:33019"/>
        <dbReference type="ChEBI" id="CHEBI:58045"/>
        <dbReference type="ChEBI" id="CHEBI:78442"/>
        <dbReference type="ChEBI" id="CHEBI:78528"/>
        <dbReference type="ChEBI" id="CHEBI:456215"/>
        <dbReference type="EC" id="6.1.1.5"/>
    </reaction>
</comment>
<comment type="cofactor">
    <cofactor evidence="1">
        <name>Zn(2+)</name>
        <dbReference type="ChEBI" id="CHEBI:29105"/>
    </cofactor>
    <text evidence="1">Binds 1 zinc ion per subunit.</text>
</comment>
<comment type="subunit">
    <text evidence="1">Monomer.</text>
</comment>
<comment type="subcellular location">
    <subcellularLocation>
        <location evidence="1">Cytoplasm</location>
    </subcellularLocation>
</comment>
<comment type="domain">
    <text evidence="1">IleRS has two distinct active sites: one for aminoacylation and one for editing. The misactivated valine is translocated from the active site to the editing site, which sterically excludes the correctly activated isoleucine. The single editing site contains two valyl binding pockets, one specific for each substrate (Val-AMP or Val-tRNA(Ile)).</text>
</comment>
<comment type="similarity">
    <text evidence="1">Belongs to the class-I aminoacyl-tRNA synthetase family. IleS type 1 subfamily.</text>
</comment>
<organism>
    <name type="scientific">Helicobacter pylori (strain HPAG1)</name>
    <dbReference type="NCBI Taxonomy" id="357544"/>
    <lineage>
        <taxon>Bacteria</taxon>
        <taxon>Pseudomonadati</taxon>
        <taxon>Campylobacterota</taxon>
        <taxon>Epsilonproteobacteria</taxon>
        <taxon>Campylobacterales</taxon>
        <taxon>Helicobacteraceae</taxon>
        <taxon>Helicobacter</taxon>
    </lineage>
</organism>
<name>SYI_HELPH</name>
<evidence type="ECO:0000255" key="1">
    <source>
        <dbReference type="HAMAP-Rule" id="MF_02002"/>
    </source>
</evidence>
<keyword id="KW-0030">Aminoacyl-tRNA synthetase</keyword>
<keyword id="KW-0067">ATP-binding</keyword>
<keyword id="KW-0963">Cytoplasm</keyword>
<keyword id="KW-0436">Ligase</keyword>
<keyword id="KW-0479">Metal-binding</keyword>
<keyword id="KW-0547">Nucleotide-binding</keyword>
<keyword id="KW-0648">Protein biosynthesis</keyword>
<keyword id="KW-0862">Zinc</keyword>